<reference key="1">
    <citation type="submission" date="2008-12" db="EMBL/GenBank/DDBJ databases">
        <title>Complete sequence of Chloroflexus aggregans DSM 9485.</title>
        <authorList>
            <consortium name="US DOE Joint Genome Institute"/>
            <person name="Lucas S."/>
            <person name="Copeland A."/>
            <person name="Lapidus A."/>
            <person name="Glavina del Rio T."/>
            <person name="Dalin E."/>
            <person name="Tice H."/>
            <person name="Pitluck S."/>
            <person name="Foster B."/>
            <person name="Larimer F."/>
            <person name="Land M."/>
            <person name="Hauser L."/>
            <person name="Kyrpides N."/>
            <person name="Mikhailova N."/>
            <person name="Bryant D.A."/>
            <person name="Richardson P."/>
        </authorList>
    </citation>
    <scope>NUCLEOTIDE SEQUENCE [LARGE SCALE GENOMIC DNA]</scope>
    <source>
        <strain>MD-66 / DSM 9485</strain>
    </source>
</reference>
<evidence type="ECO:0000255" key="1">
    <source>
        <dbReference type="HAMAP-Rule" id="MF_00375"/>
    </source>
</evidence>
<organism>
    <name type="scientific">Chloroflexus aggregans (strain MD-66 / DSM 9485)</name>
    <dbReference type="NCBI Taxonomy" id="326427"/>
    <lineage>
        <taxon>Bacteria</taxon>
        <taxon>Bacillati</taxon>
        <taxon>Chloroflexota</taxon>
        <taxon>Chloroflexia</taxon>
        <taxon>Chloroflexales</taxon>
        <taxon>Chloroflexineae</taxon>
        <taxon>Chloroflexaceae</taxon>
        <taxon>Chloroflexus</taxon>
    </lineage>
</organism>
<accession>B8G822</accession>
<gene>
    <name evidence="1" type="primary">hemL</name>
    <name type="ordered locus">Cagg_1293</name>
</gene>
<comment type="catalytic activity">
    <reaction evidence="1">
        <text>(S)-4-amino-5-oxopentanoate = 5-aminolevulinate</text>
        <dbReference type="Rhea" id="RHEA:14265"/>
        <dbReference type="ChEBI" id="CHEBI:57501"/>
        <dbReference type="ChEBI" id="CHEBI:356416"/>
        <dbReference type="EC" id="5.4.3.8"/>
    </reaction>
</comment>
<comment type="cofactor">
    <cofactor evidence="1">
        <name>pyridoxal 5'-phosphate</name>
        <dbReference type="ChEBI" id="CHEBI:597326"/>
    </cofactor>
</comment>
<comment type="pathway">
    <text evidence="1">Porphyrin-containing compound metabolism; protoporphyrin-IX biosynthesis; 5-aminolevulinate from L-glutamyl-tRNA(Glu): step 2/2.</text>
</comment>
<comment type="pathway">
    <text evidence="1">Porphyrin-containing compound metabolism; chlorophyll biosynthesis.</text>
</comment>
<comment type="subunit">
    <text evidence="1">Homodimer.</text>
</comment>
<comment type="subcellular location">
    <subcellularLocation>
        <location evidence="1">Cytoplasm</location>
    </subcellularLocation>
</comment>
<comment type="similarity">
    <text evidence="1">Belongs to the class-III pyridoxal-phosphate-dependent aminotransferase family. HemL subfamily.</text>
</comment>
<feature type="chain" id="PRO_1000201013" description="Glutamate-1-semialdehyde 2,1-aminomutase">
    <location>
        <begin position="1"/>
        <end position="438"/>
    </location>
</feature>
<feature type="modified residue" description="N6-(pyridoxal phosphate)lysine" evidence="1">
    <location>
        <position position="272"/>
    </location>
</feature>
<name>GSA_CHLAD</name>
<protein>
    <recommendedName>
        <fullName evidence="1">Glutamate-1-semialdehyde 2,1-aminomutase</fullName>
        <shortName evidence="1">GSA</shortName>
        <ecNumber evidence="1">5.4.3.8</ecNumber>
    </recommendedName>
    <alternativeName>
        <fullName evidence="1">Glutamate-1-semialdehyde aminotransferase</fullName>
        <shortName evidence="1">GSA-AT</shortName>
    </alternativeName>
</protein>
<dbReference type="EC" id="5.4.3.8" evidence="1"/>
<dbReference type="EMBL" id="CP001337">
    <property type="protein sequence ID" value="ACL24201.1"/>
    <property type="molecule type" value="Genomic_DNA"/>
</dbReference>
<dbReference type="RefSeq" id="WP_012616565.1">
    <property type="nucleotide sequence ID" value="NC_011831.1"/>
</dbReference>
<dbReference type="SMR" id="B8G822"/>
<dbReference type="STRING" id="326427.Cagg_1293"/>
<dbReference type="KEGG" id="cag:Cagg_1293"/>
<dbReference type="eggNOG" id="COG0001">
    <property type="taxonomic scope" value="Bacteria"/>
</dbReference>
<dbReference type="HOGENOM" id="CLU_016922_1_5_0"/>
<dbReference type="OrthoDB" id="9807885at2"/>
<dbReference type="UniPathway" id="UPA00251">
    <property type="reaction ID" value="UER00317"/>
</dbReference>
<dbReference type="UniPathway" id="UPA00668"/>
<dbReference type="Proteomes" id="UP000002508">
    <property type="component" value="Chromosome"/>
</dbReference>
<dbReference type="GO" id="GO:0005737">
    <property type="term" value="C:cytoplasm"/>
    <property type="evidence" value="ECO:0007669"/>
    <property type="project" value="UniProtKB-SubCell"/>
</dbReference>
<dbReference type="GO" id="GO:0042286">
    <property type="term" value="F:glutamate-1-semialdehyde 2,1-aminomutase activity"/>
    <property type="evidence" value="ECO:0007669"/>
    <property type="project" value="UniProtKB-UniRule"/>
</dbReference>
<dbReference type="GO" id="GO:0030170">
    <property type="term" value="F:pyridoxal phosphate binding"/>
    <property type="evidence" value="ECO:0007669"/>
    <property type="project" value="InterPro"/>
</dbReference>
<dbReference type="GO" id="GO:0008483">
    <property type="term" value="F:transaminase activity"/>
    <property type="evidence" value="ECO:0007669"/>
    <property type="project" value="InterPro"/>
</dbReference>
<dbReference type="GO" id="GO:0015995">
    <property type="term" value="P:chlorophyll biosynthetic process"/>
    <property type="evidence" value="ECO:0007669"/>
    <property type="project" value="UniProtKB-UniRule"/>
</dbReference>
<dbReference type="GO" id="GO:0006782">
    <property type="term" value="P:protoporphyrinogen IX biosynthetic process"/>
    <property type="evidence" value="ECO:0007669"/>
    <property type="project" value="UniProtKB-UniRule"/>
</dbReference>
<dbReference type="CDD" id="cd00610">
    <property type="entry name" value="OAT_like"/>
    <property type="match status" value="1"/>
</dbReference>
<dbReference type="FunFam" id="3.40.640.10:FF:000021">
    <property type="entry name" value="Glutamate-1-semialdehyde 2,1-aminomutase"/>
    <property type="match status" value="1"/>
</dbReference>
<dbReference type="Gene3D" id="3.90.1150.10">
    <property type="entry name" value="Aspartate Aminotransferase, domain 1"/>
    <property type="match status" value="1"/>
</dbReference>
<dbReference type="Gene3D" id="3.40.640.10">
    <property type="entry name" value="Type I PLP-dependent aspartate aminotransferase-like (Major domain)"/>
    <property type="match status" value="1"/>
</dbReference>
<dbReference type="HAMAP" id="MF_00375">
    <property type="entry name" value="HemL_aminotrans_3"/>
    <property type="match status" value="1"/>
</dbReference>
<dbReference type="InterPro" id="IPR004639">
    <property type="entry name" value="4pyrrol_synth_GluAld_NH2Trfase"/>
</dbReference>
<dbReference type="InterPro" id="IPR005814">
    <property type="entry name" value="Aminotrans_3"/>
</dbReference>
<dbReference type="InterPro" id="IPR049704">
    <property type="entry name" value="Aminotrans_3_PPA_site"/>
</dbReference>
<dbReference type="InterPro" id="IPR015424">
    <property type="entry name" value="PyrdxlP-dep_Trfase"/>
</dbReference>
<dbReference type="InterPro" id="IPR015421">
    <property type="entry name" value="PyrdxlP-dep_Trfase_major"/>
</dbReference>
<dbReference type="InterPro" id="IPR015422">
    <property type="entry name" value="PyrdxlP-dep_Trfase_small"/>
</dbReference>
<dbReference type="NCBIfam" id="TIGR00713">
    <property type="entry name" value="hemL"/>
    <property type="match status" value="1"/>
</dbReference>
<dbReference type="NCBIfam" id="NF000818">
    <property type="entry name" value="PRK00062.1"/>
    <property type="match status" value="1"/>
</dbReference>
<dbReference type="PANTHER" id="PTHR43713">
    <property type="entry name" value="GLUTAMATE-1-SEMIALDEHYDE 2,1-AMINOMUTASE"/>
    <property type="match status" value="1"/>
</dbReference>
<dbReference type="PANTHER" id="PTHR43713:SF3">
    <property type="entry name" value="GLUTAMATE-1-SEMIALDEHYDE 2,1-AMINOMUTASE 1, CHLOROPLASTIC-RELATED"/>
    <property type="match status" value="1"/>
</dbReference>
<dbReference type="Pfam" id="PF00202">
    <property type="entry name" value="Aminotran_3"/>
    <property type="match status" value="1"/>
</dbReference>
<dbReference type="SUPFAM" id="SSF53383">
    <property type="entry name" value="PLP-dependent transferases"/>
    <property type="match status" value="1"/>
</dbReference>
<dbReference type="PROSITE" id="PS00600">
    <property type="entry name" value="AA_TRANSFER_CLASS_3"/>
    <property type="match status" value="1"/>
</dbReference>
<sequence length="438" mass="46694">MTIATERYSRSQANFAAAQAVIPGGVNSPVRAFRGVGGSPIFFERGQGAHIWDVDGNRYIDYVLSWGPLLLGHAHPAVVNAIATQAQRGTSFGAPTELETDLARLVLDLVPSIEQIRFVNSGTEATMSALRLARAATGRRLIVKFNGCYHGHADMLLVQAGSGVATLGLPDSPGVPPTVAADTITIEYNDLDAAADLFARRGSEIAAVIVEPIAANMGFVLPKPGFLSGLRELTQQHGAIFILDEVMTGFRVAPGGAQALWNLDPDLTCLGKVIGGGLPVGAYAGKRHLMQLVAPAGPMYQAGTLSGNPLAMIAGLTTLRTAFTDDNTAFQRAVTLTTRLANGLRELGERYRIPLQVGNVGTMFGCYFLRHADAQITNYVEAKANADTQRYARFFWAMADRGIYLAPSQFEAGFVSTAHTDADIDQTLTAVEEAFAQL</sequence>
<keyword id="KW-0149">Chlorophyll biosynthesis</keyword>
<keyword id="KW-0963">Cytoplasm</keyword>
<keyword id="KW-0413">Isomerase</keyword>
<keyword id="KW-0627">Porphyrin biosynthesis</keyword>
<keyword id="KW-0663">Pyridoxal phosphate</keyword>
<proteinExistence type="inferred from homology"/>